<reference key="1">
    <citation type="journal article" date="2006" name="Nat. Biotechnol.">
        <title>Genome sequence of the bioplastic-producing 'Knallgas' bacterium Ralstonia eutropha H16.</title>
        <authorList>
            <person name="Pohlmann A."/>
            <person name="Fricke W.F."/>
            <person name="Reinecke F."/>
            <person name="Kusian B."/>
            <person name="Liesegang H."/>
            <person name="Cramm R."/>
            <person name="Eitinger T."/>
            <person name="Ewering C."/>
            <person name="Poetter M."/>
            <person name="Schwartz E."/>
            <person name="Strittmatter A."/>
            <person name="Voss I."/>
            <person name="Gottschalk G."/>
            <person name="Steinbuechel A."/>
            <person name="Friedrich B."/>
            <person name="Bowien B."/>
        </authorList>
    </citation>
    <scope>NUCLEOTIDE SEQUENCE [LARGE SCALE GENOMIC DNA]</scope>
    <source>
        <strain>ATCC 17699 / DSM 428 / KCTC 22496 / NCIMB 10442 / H16 / Stanier 337</strain>
    </source>
</reference>
<keyword id="KW-0067">ATP-binding</keyword>
<keyword id="KW-0997">Cell inner membrane</keyword>
<keyword id="KW-1003">Cell membrane</keyword>
<keyword id="KW-0472">Membrane</keyword>
<keyword id="KW-0547">Nucleotide-binding</keyword>
<keyword id="KW-1185">Reference proteome</keyword>
<keyword id="KW-1278">Translocase</keyword>
<keyword id="KW-0813">Transport</keyword>
<name>SSUB_CUPNH</name>
<gene>
    <name evidence="1" type="primary">ssuB</name>
    <name type="ordered locus">H16_A2242</name>
</gene>
<evidence type="ECO:0000255" key="1">
    <source>
        <dbReference type="HAMAP-Rule" id="MF_01724"/>
    </source>
</evidence>
<comment type="function">
    <text evidence="1">Part of the ABC transporter complex SsuABC involved in aliphatic sulfonates import. Responsible for energy coupling to the transport system.</text>
</comment>
<comment type="catalytic activity">
    <reaction evidence="1">
        <text>ATP + H2O + aliphatic sulfonate-[sulfonate-binding protein]Side 1 = ADP + phosphate + aliphatic sulfonateSide 2 + [sulfonate-binding protein]Side 1.</text>
        <dbReference type="EC" id="7.6.2.14"/>
    </reaction>
</comment>
<comment type="subunit">
    <text evidence="1">The complex is composed of two ATP-binding proteins (SsuB), two transmembrane proteins (SsuC) and a solute-binding protein (SsuA).</text>
</comment>
<comment type="subcellular location">
    <subcellularLocation>
        <location evidence="1">Cell inner membrane</location>
        <topology evidence="1">Peripheral membrane protein</topology>
    </subcellularLocation>
</comment>
<comment type="similarity">
    <text evidence="1">Belongs to the ABC transporter superfamily. Aliphatic sulfonates importer (TC 3.A.1.17.2) family.</text>
</comment>
<accession>Q0K9I2</accession>
<dbReference type="EC" id="7.6.2.14" evidence="1"/>
<dbReference type="EMBL" id="AM260479">
    <property type="protein sequence ID" value="CAJ93339.1"/>
    <property type="molecule type" value="Genomic_DNA"/>
</dbReference>
<dbReference type="RefSeq" id="WP_011615570.1">
    <property type="nucleotide sequence ID" value="NC_008313.1"/>
</dbReference>
<dbReference type="SMR" id="Q0K9I2"/>
<dbReference type="STRING" id="381666.H16_A2242"/>
<dbReference type="KEGG" id="reh:H16_A2242"/>
<dbReference type="PATRIC" id="fig|381666.6.peg.2647"/>
<dbReference type="eggNOG" id="COG1116">
    <property type="taxonomic scope" value="Bacteria"/>
</dbReference>
<dbReference type="HOGENOM" id="CLU_000604_1_22_4"/>
<dbReference type="OrthoDB" id="9783039at2"/>
<dbReference type="Proteomes" id="UP000008210">
    <property type="component" value="Chromosome 1"/>
</dbReference>
<dbReference type="GO" id="GO:0005886">
    <property type="term" value="C:plasma membrane"/>
    <property type="evidence" value="ECO:0007669"/>
    <property type="project" value="UniProtKB-SubCell"/>
</dbReference>
<dbReference type="GO" id="GO:0005524">
    <property type="term" value="F:ATP binding"/>
    <property type="evidence" value="ECO:0007669"/>
    <property type="project" value="UniProtKB-KW"/>
</dbReference>
<dbReference type="GO" id="GO:0016887">
    <property type="term" value="F:ATP hydrolysis activity"/>
    <property type="evidence" value="ECO:0007669"/>
    <property type="project" value="InterPro"/>
</dbReference>
<dbReference type="CDD" id="cd03293">
    <property type="entry name" value="ABC_NrtD_SsuB_transporters"/>
    <property type="match status" value="1"/>
</dbReference>
<dbReference type="Gene3D" id="3.40.50.300">
    <property type="entry name" value="P-loop containing nucleotide triphosphate hydrolases"/>
    <property type="match status" value="1"/>
</dbReference>
<dbReference type="InterPro" id="IPR003593">
    <property type="entry name" value="AAA+_ATPase"/>
</dbReference>
<dbReference type="InterPro" id="IPR003439">
    <property type="entry name" value="ABC_transporter-like_ATP-bd"/>
</dbReference>
<dbReference type="InterPro" id="IPR017871">
    <property type="entry name" value="ABC_transporter-like_CS"/>
</dbReference>
<dbReference type="InterPro" id="IPR050166">
    <property type="entry name" value="ABC_transporter_ATP-bind"/>
</dbReference>
<dbReference type="InterPro" id="IPR027417">
    <property type="entry name" value="P-loop_NTPase"/>
</dbReference>
<dbReference type="PANTHER" id="PTHR42788:SF17">
    <property type="entry name" value="ALIPHATIC SULFONATES IMPORT ATP-BINDING PROTEIN SSUB"/>
    <property type="match status" value="1"/>
</dbReference>
<dbReference type="PANTHER" id="PTHR42788">
    <property type="entry name" value="TAURINE IMPORT ATP-BINDING PROTEIN-RELATED"/>
    <property type="match status" value="1"/>
</dbReference>
<dbReference type="Pfam" id="PF00005">
    <property type="entry name" value="ABC_tran"/>
    <property type="match status" value="1"/>
</dbReference>
<dbReference type="SMART" id="SM00382">
    <property type="entry name" value="AAA"/>
    <property type="match status" value="1"/>
</dbReference>
<dbReference type="SUPFAM" id="SSF52540">
    <property type="entry name" value="P-loop containing nucleoside triphosphate hydrolases"/>
    <property type="match status" value="1"/>
</dbReference>
<dbReference type="PROSITE" id="PS00211">
    <property type="entry name" value="ABC_TRANSPORTER_1"/>
    <property type="match status" value="1"/>
</dbReference>
<dbReference type="PROSITE" id="PS50893">
    <property type="entry name" value="ABC_TRANSPORTER_2"/>
    <property type="match status" value="1"/>
</dbReference>
<dbReference type="PROSITE" id="PS51291">
    <property type="entry name" value="SSUB"/>
    <property type="match status" value="1"/>
</dbReference>
<feature type="chain" id="PRO_0000279946" description="Aliphatic sulfonates import ATP-binding protein SsuB">
    <location>
        <begin position="1"/>
        <end position="303"/>
    </location>
</feature>
<feature type="domain" description="ABC transporter" evidence="1">
    <location>
        <begin position="39"/>
        <end position="263"/>
    </location>
</feature>
<feature type="binding site" evidence="1">
    <location>
        <begin position="71"/>
        <end position="78"/>
    </location>
    <ligand>
        <name>ATP</name>
        <dbReference type="ChEBI" id="CHEBI:30616"/>
    </ligand>
</feature>
<sequence>MQMYPVEQAALVELEAGLARREAAQPAAEAPRKAGGVALHVRQVVKRYDGREVLHNVALDVAPGEFLAIVGRSGCGKSTLLRLVAGLEAADGGSITVDGESAAKGRARHADVRVMFQDARLLPWKRVLDNVALGLPRTRRGEAADVLAQVGLADRAREWPARLSGGQRQRVALARALVHHPQLLLLDEPLGALDALTRIEMQGLIESLWRRLGFTALLVTHDVSEAVALADRIVLIEDGRIAMDERVALARPRERGAAGFAQLEAAVLKRVMRQAPQAQVPSHAGAHADPAATTAPLNVSWAA</sequence>
<organism>
    <name type="scientific">Cupriavidus necator (strain ATCC 17699 / DSM 428 / KCTC 22496 / NCIMB 10442 / H16 / Stanier 337)</name>
    <name type="common">Ralstonia eutropha</name>
    <dbReference type="NCBI Taxonomy" id="381666"/>
    <lineage>
        <taxon>Bacteria</taxon>
        <taxon>Pseudomonadati</taxon>
        <taxon>Pseudomonadota</taxon>
        <taxon>Betaproteobacteria</taxon>
        <taxon>Burkholderiales</taxon>
        <taxon>Burkholderiaceae</taxon>
        <taxon>Cupriavidus</taxon>
    </lineage>
</organism>
<protein>
    <recommendedName>
        <fullName evidence="1">Aliphatic sulfonates import ATP-binding protein SsuB</fullName>
        <ecNumber evidence="1">7.6.2.14</ecNumber>
    </recommendedName>
</protein>
<proteinExistence type="inferred from homology"/>